<dbReference type="EMBL" id="CP001277">
    <property type="protein sequence ID" value="ACQ67327.1"/>
    <property type="molecule type" value="Genomic_DNA"/>
</dbReference>
<dbReference type="RefSeq" id="WP_015873151.1">
    <property type="nucleotide sequence ID" value="NC_012751.1"/>
</dbReference>
<dbReference type="SMR" id="C4K434"/>
<dbReference type="STRING" id="572265.HDEF_0585"/>
<dbReference type="GeneID" id="66260459"/>
<dbReference type="KEGG" id="hde:HDEF_0585"/>
<dbReference type="eggNOG" id="COG0360">
    <property type="taxonomic scope" value="Bacteria"/>
</dbReference>
<dbReference type="HOGENOM" id="CLU_113441_6_0_6"/>
<dbReference type="Proteomes" id="UP000002334">
    <property type="component" value="Chromosome"/>
</dbReference>
<dbReference type="GO" id="GO:0022627">
    <property type="term" value="C:cytosolic small ribosomal subunit"/>
    <property type="evidence" value="ECO:0007669"/>
    <property type="project" value="TreeGrafter"/>
</dbReference>
<dbReference type="GO" id="GO:0070181">
    <property type="term" value="F:small ribosomal subunit rRNA binding"/>
    <property type="evidence" value="ECO:0007669"/>
    <property type="project" value="TreeGrafter"/>
</dbReference>
<dbReference type="GO" id="GO:0003735">
    <property type="term" value="F:structural constituent of ribosome"/>
    <property type="evidence" value="ECO:0007669"/>
    <property type="project" value="InterPro"/>
</dbReference>
<dbReference type="GO" id="GO:0006412">
    <property type="term" value="P:translation"/>
    <property type="evidence" value="ECO:0007669"/>
    <property type="project" value="UniProtKB-UniRule"/>
</dbReference>
<dbReference type="CDD" id="cd00473">
    <property type="entry name" value="bS6"/>
    <property type="match status" value="1"/>
</dbReference>
<dbReference type="FunFam" id="3.30.70.60:FF:000003">
    <property type="entry name" value="30S ribosomal protein S6"/>
    <property type="match status" value="1"/>
</dbReference>
<dbReference type="Gene3D" id="3.30.70.60">
    <property type="match status" value="1"/>
</dbReference>
<dbReference type="HAMAP" id="MF_00360">
    <property type="entry name" value="Ribosomal_bS6"/>
    <property type="match status" value="1"/>
</dbReference>
<dbReference type="InterPro" id="IPR000529">
    <property type="entry name" value="Ribosomal_bS6"/>
</dbReference>
<dbReference type="InterPro" id="IPR020815">
    <property type="entry name" value="Ribosomal_bS6_CS"/>
</dbReference>
<dbReference type="InterPro" id="IPR035980">
    <property type="entry name" value="Ribosomal_bS6_sf"/>
</dbReference>
<dbReference type="InterPro" id="IPR020814">
    <property type="entry name" value="Ribosomal_S6_plastid/chlpt"/>
</dbReference>
<dbReference type="InterPro" id="IPR014717">
    <property type="entry name" value="Transl_elong_EF1B/ribsomal_bS6"/>
</dbReference>
<dbReference type="NCBIfam" id="TIGR00166">
    <property type="entry name" value="S6"/>
    <property type="match status" value="1"/>
</dbReference>
<dbReference type="PANTHER" id="PTHR21011">
    <property type="entry name" value="MITOCHONDRIAL 28S RIBOSOMAL PROTEIN S6"/>
    <property type="match status" value="1"/>
</dbReference>
<dbReference type="PANTHER" id="PTHR21011:SF1">
    <property type="entry name" value="SMALL RIBOSOMAL SUBUNIT PROTEIN BS6M"/>
    <property type="match status" value="1"/>
</dbReference>
<dbReference type="Pfam" id="PF01250">
    <property type="entry name" value="Ribosomal_S6"/>
    <property type="match status" value="1"/>
</dbReference>
<dbReference type="SUPFAM" id="SSF54995">
    <property type="entry name" value="Ribosomal protein S6"/>
    <property type="match status" value="1"/>
</dbReference>
<dbReference type="PROSITE" id="PS01048">
    <property type="entry name" value="RIBOSOMAL_S6"/>
    <property type="match status" value="1"/>
</dbReference>
<reference key="1">
    <citation type="journal article" date="2009" name="Proc. Natl. Acad. Sci. U.S.A.">
        <title>Hamiltonella defensa, genome evolution of protective bacterial endosymbiont from pathogenic ancestors.</title>
        <authorList>
            <person name="Degnan P.H."/>
            <person name="Yu Y."/>
            <person name="Sisneros N."/>
            <person name="Wing R.A."/>
            <person name="Moran N.A."/>
        </authorList>
    </citation>
    <scope>NUCLEOTIDE SEQUENCE [LARGE SCALE GENOMIC DNA]</scope>
    <source>
        <strain>5AT</strain>
    </source>
</reference>
<organism>
    <name type="scientific">Hamiltonella defensa subsp. Acyrthosiphon pisum (strain 5AT)</name>
    <dbReference type="NCBI Taxonomy" id="572265"/>
    <lineage>
        <taxon>Bacteria</taxon>
        <taxon>Pseudomonadati</taxon>
        <taxon>Pseudomonadota</taxon>
        <taxon>Gammaproteobacteria</taxon>
        <taxon>Enterobacterales</taxon>
        <taxon>Enterobacteriaceae</taxon>
        <taxon>aphid secondary symbionts</taxon>
        <taxon>Candidatus Hamiltonella</taxon>
    </lineage>
</organism>
<keyword id="KW-0687">Ribonucleoprotein</keyword>
<keyword id="KW-0689">Ribosomal protein</keyword>
<keyword id="KW-0694">RNA-binding</keyword>
<keyword id="KW-0699">rRNA-binding</keyword>
<sequence>MRHYEIVFMVHPDQSDQVPGMIQRYSTVITQSGGQIHRIEDWGRRQLAYAINKLHKAHYVLLNVEAPQNAINELETNFRFNDAVMRNLIKRMNHAVTEESPIIKMKDERREVVELTTSGSEDNQKDHHKEDLDKKTDEFSEEN</sequence>
<gene>
    <name evidence="1" type="primary">rpsF</name>
    <name type="ordered locus">HDEF_0585</name>
</gene>
<name>RS6_HAMD5</name>
<evidence type="ECO:0000255" key="1">
    <source>
        <dbReference type="HAMAP-Rule" id="MF_00360"/>
    </source>
</evidence>
<evidence type="ECO:0000256" key="2">
    <source>
        <dbReference type="SAM" id="MobiDB-lite"/>
    </source>
</evidence>
<evidence type="ECO:0000305" key="3"/>
<feature type="chain" id="PRO_1000205400" description="Small ribosomal subunit protein bS6">
    <location>
        <begin position="1"/>
        <end position="143"/>
    </location>
</feature>
<feature type="region of interest" description="Disordered" evidence="2">
    <location>
        <begin position="100"/>
        <end position="143"/>
    </location>
</feature>
<feature type="compositionally biased region" description="Basic and acidic residues" evidence="2">
    <location>
        <begin position="104"/>
        <end position="113"/>
    </location>
</feature>
<feature type="compositionally biased region" description="Basic and acidic residues" evidence="2">
    <location>
        <begin position="122"/>
        <end position="143"/>
    </location>
</feature>
<accession>C4K434</accession>
<comment type="function">
    <text evidence="1">Binds together with bS18 to 16S ribosomal RNA.</text>
</comment>
<comment type="similarity">
    <text evidence="1">Belongs to the bacterial ribosomal protein bS6 family.</text>
</comment>
<proteinExistence type="inferred from homology"/>
<protein>
    <recommendedName>
        <fullName evidence="1">Small ribosomal subunit protein bS6</fullName>
    </recommendedName>
    <alternativeName>
        <fullName evidence="3">30S ribosomal protein S6</fullName>
    </alternativeName>
</protein>